<feature type="chain" id="PRO_0000187309" description="Pyrroline-5-carboxylate reductase">
    <location>
        <begin position="1"/>
        <end position="261"/>
    </location>
</feature>
<evidence type="ECO:0000255" key="1">
    <source>
        <dbReference type="HAMAP-Rule" id="MF_01925"/>
    </source>
</evidence>
<reference key="1">
    <citation type="journal article" date="1994" name="Biochem. Biophys. Res. Commun.">
        <title>Molecular cloning and sequence analysis of the proC gene encoding delta 1-pyrroline-5-carboxylate reductase from an extremely thermophilic eubacterium Thermus thermophilus.</title>
        <authorList>
            <person name="Hoshino T."/>
            <person name="Kosuge T."/>
            <person name="Hidaka Y."/>
            <person name="Tabata K."/>
            <person name="Nakahara T."/>
        </authorList>
    </citation>
    <scope>NUCLEOTIDE SEQUENCE [GENOMIC DNA]</scope>
</reference>
<reference key="2">
    <citation type="journal article" date="2004" name="Nat. Biotechnol.">
        <title>The genome sequence of the extreme thermophile Thermus thermophilus.</title>
        <authorList>
            <person name="Henne A."/>
            <person name="Brueggemann H."/>
            <person name="Raasch C."/>
            <person name="Wiezer A."/>
            <person name="Hartsch T."/>
            <person name="Liesegang H."/>
            <person name="Johann A."/>
            <person name="Lienard T."/>
            <person name="Gohl O."/>
            <person name="Martinez-Arias R."/>
            <person name="Jacobi C."/>
            <person name="Starkuviene V."/>
            <person name="Schlenczeck S."/>
            <person name="Dencker S."/>
            <person name="Huber R."/>
            <person name="Klenk H.-P."/>
            <person name="Kramer W."/>
            <person name="Merkl R."/>
            <person name="Gottschalk G."/>
            <person name="Fritz H.-J."/>
        </authorList>
    </citation>
    <scope>NUCLEOTIDE SEQUENCE [LARGE SCALE GENOMIC DNA]</scope>
    <source>
        <strain>ATCC BAA-163 / DSM 7039 / HB27</strain>
    </source>
</reference>
<organism>
    <name type="scientific">Thermus thermophilus (strain ATCC BAA-163 / DSM 7039 / HB27)</name>
    <dbReference type="NCBI Taxonomy" id="262724"/>
    <lineage>
        <taxon>Bacteria</taxon>
        <taxon>Thermotogati</taxon>
        <taxon>Deinococcota</taxon>
        <taxon>Deinococci</taxon>
        <taxon>Thermales</taxon>
        <taxon>Thermaceae</taxon>
        <taxon>Thermus</taxon>
    </lineage>
</organism>
<protein>
    <recommendedName>
        <fullName evidence="1">Pyrroline-5-carboxylate reductase</fullName>
        <shortName evidence="1">P5C reductase</shortName>
        <shortName evidence="1">P5CR</shortName>
        <ecNumber evidence="1">1.5.1.2</ecNumber>
    </recommendedName>
    <alternativeName>
        <fullName evidence="1">PCA reductase</fullName>
    </alternativeName>
</protein>
<keyword id="KW-0028">Amino-acid biosynthesis</keyword>
<keyword id="KW-0963">Cytoplasm</keyword>
<keyword id="KW-0521">NADP</keyword>
<keyword id="KW-0560">Oxidoreductase</keyword>
<keyword id="KW-0641">Proline biosynthesis</keyword>
<name>P5CR_THET2</name>
<dbReference type="EC" id="1.5.1.2" evidence="1"/>
<dbReference type="EMBL" id="D25413">
    <property type="protein sequence ID" value="BAA05001.1"/>
    <property type="molecule type" value="Genomic_DNA"/>
</dbReference>
<dbReference type="EMBL" id="AE017221">
    <property type="protein sequence ID" value="AAS80848.1"/>
    <property type="molecule type" value="Genomic_DNA"/>
</dbReference>
<dbReference type="RefSeq" id="WP_011172945.1">
    <property type="nucleotide sequence ID" value="NC_005835.1"/>
</dbReference>
<dbReference type="SMR" id="P54893"/>
<dbReference type="KEGG" id="tth:TT_C0500"/>
<dbReference type="eggNOG" id="COG0345">
    <property type="taxonomic scope" value="Bacteria"/>
</dbReference>
<dbReference type="HOGENOM" id="CLU_042344_3_0_0"/>
<dbReference type="OrthoDB" id="9805754at2"/>
<dbReference type="UniPathway" id="UPA00098">
    <property type="reaction ID" value="UER00361"/>
</dbReference>
<dbReference type="Proteomes" id="UP000000592">
    <property type="component" value="Chromosome"/>
</dbReference>
<dbReference type="GO" id="GO:0005737">
    <property type="term" value="C:cytoplasm"/>
    <property type="evidence" value="ECO:0007669"/>
    <property type="project" value="UniProtKB-SubCell"/>
</dbReference>
<dbReference type="GO" id="GO:0004735">
    <property type="term" value="F:pyrroline-5-carboxylate reductase activity"/>
    <property type="evidence" value="ECO:0007669"/>
    <property type="project" value="UniProtKB-UniRule"/>
</dbReference>
<dbReference type="GO" id="GO:0055129">
    <property type="term" value="P:L-proline biosynthetic process"/>
    <property type="evidence" value="ECO:0007669"/>
    <property type="project" value="UniProtKB-UniRule"/>
</dbReference>
<dbReference type="FunFam" id="1.10.3730.10:FF:000001">
    <property type="entry name" value="Pyrroline-5-carboxylate reductase"/>
    <property type="match status" value="1"/>
</dbReference>
<dbReference type="Gene3D" id="3.40.50.720">
    <property type="entry name" value="NAD(P)-binding Rossmann-like Domain"/>
    <property type="match status" value="1"/>
</dbReference>
<dbReference type="Gene3D" id="1.10.3730.10">
    <property type="entry name" value="ProC C-terminal domain-like"/>
    <property type="match status" value="1"/>
</dbReference>
<dbReference type="HAMAP" id="MF_01925">
    <property type="entry name" value="P5C_reductase"/>
    <property type="match status" value="1"/>
</dbReference>
<dbReference type="InterPro" id="IPR008927">
    <property type="entry name" value="6-PGluconate_DH-like_C_sf"/>
</dbReference>
<dbReference type="InterPro" id="IPR036291">
    <property type="entry name" value="NAD(P)-bd_dom_sf"/>
</dbReference>
<dbReference type="InterPro" id="IPR028939">
    <property type="entry name" value="P5C_Rdtase_cat_N"/>
</dbReference>
<dbReference type="InterPro" id="IPR053790">
    <property type="entry name" value="P5CR-like_CS"/>
</dbReference>
<dbReference type="InterPro" id="IPR029036">
    <property type="entry name" value="P5CR_dimer"/>
</dbReference>
<dbReference type="InterPro" id="IPR000304">
    <property type="entry name" value="Pyrroline-COOH_reductase"/>
</dbReference>
<dbReference type="NCBIfam" id="TIGR00112">
    <property type="entry name" value="proC"/>
    <property type="match status" value="1"/>
</dbReference>
<dbReference type="PANTHER" id="PTHR11645">
    <property type="entry name" value="PYRROLINE-5-CARBOXYLATE REDUCTASE"/>
    <property type="match status" value="1"/>
</dbReference>
<dbReference type="PANTHER" id="PTHR11645:SF0">
    <property type="entry name" value="PYRROLINE-5-CARBOXYLATE REDUCTASE 3"/>
    <property type="match status" value="1"/>
</dbReference>
<dbReference type="Pfam" id="PF03807">
    <property type="entry name" value="F420_oxidored"/>
    <property type="match status" value="1"/>
</dbReference>
<dbReference type="Pfam" id="PF14748">
    <property type="entry name" value="P5CR_dimer"/>
    <property type="match status" value="1"/>
</dbReference>
<dbReference type="PIRSF" id="PIRSF000193">
    <property type="entry name" value="Pyrrol-5-carb_rd"/>
    <property type="match status" value="1"/>
</dbReference>
<dbReference type="SUPFAM" id="SSF48179">
    <property type="entry name" value="6-phosphogluconate dehydrogenase C-terminal domain-like"/>
    <property type="match status" value="1"/>
</dbReference>
<dbReference type="SUPFAM" id="SSF51735">
    <property type="entry name" value="NAD(P)-binding Rossmann-fold domains"/>
    <property type="match status" value="1"/>
</dbReference>
<dbReference type="PROSITE" id="PS00521">
    <property type="entry name" value="P5CR"/>
    <property type="match status" value="1"/>
</dbReference>
<sequence>MRLAFVGLGKMGRSILKGALERGFLRPEEVGVLGRTPERSRELAEPFGVRPLTRADLGMAERVLIAVQPRDFPALAPEIAHHRLGYISIMAGISTSVLARRLDNRRVVRAMPNLAVVIGESSTALTALKEAREAEDLAFARALFATVGDVYEIPEHLFDAFTGMSASAPAYLAVVAEALADAGVKMGMPRALALRLAADALAATGELLKGRHPAQVKDEVASPGGTTIHGLHALEARAVRAAFYEAVEAATRRGHELGESE</sequence>
<proteinExistence type="inferred from homology"/>
<gene>
    <name evidence="1" type="primary">proC</name>
    <name type="ordered locus">TT_C0500</name>
</gene>
<accession>P54893</accession>
<comment type="function">
    <text evidence="1">Catalyzes the reduction of 1-pyrroline-5-carboxylate (PCA) to L-proline.</text>
</comment>
<comment type="catalytic activity">
    <reaction evidence="1">
        <text>L-proline + NADP(+) = (S)-1-pyrroline-5-carboxylate + NADPH + 2 H(+)</text>
        <dbReference type="Rhea" id="RHEA:14109"/>
        <dbReference type="ChEBI" id="CHEBI:15378"/>
        <dbReference type="ChEBI" id="CHEBI:17388"/>
        <dbReference type="ChEBI" id="CHEBI:57783"/>
        <dbReference type="ChEBI" id="CHEBI:58349"/>
        <dbReference type="ChEBI" id="CHEBI:60039"/>
        <dbReference type="EC" id="1.5.1.2"/>
    </reaction>
</comment>
<comment type="catalytic activity">
    <reaction evidence="1">
        <text>L-proline + NAD(+) = (S)-1-pyrroline-5-carboxylate + NADH + 2 H(+)</text>
        <dbReference type="Rhea" id="RHEA:14105"/>
        <dbReference type="ChEBI" id="CHEBI:15378"/>
        <dbReference type="ChEBI" id="CHEBI:17388"/>
        <dbReference type="ChEBI" id="CHEBI:57540"/>
        <dbReference type="ChEBI" id="CHEBI:57945"/>
        <dbReference type="ChEBI" id="CHEBI:60039"/>
        <dbReference type="EC" id="1.5.1.2"/>
    </reaction>
</comment>
<comment type="pathway">
    <text evidence="1">Amino-acid biosynthesis; L-proline biosynthesis; L-proline from L-glutamate 5-semialdehyde: step 1/1.</text>
</comment>
<comment type="subcellular location">
    <subcellularLocation>
        <location>Cytoplasm</location>
    </subcellularLocation>
</comment>
<comment type="similarity">
    <text evidence="1">Belongs to the pyrroline-5-carboxylate reductase family.</text>
</comment>